<gene>
    <name type="ordered locus">RP169</name>
</gene>
<evidence type="ECO:0000255" key="1"/>
<evidence type="ECO:0000305" key="2"/>
<sequence length="90" mass="10086">MIILHLIHRSLNMLINTSNNLLITTIHLLSSIGAINWGLVGLFNFNLVTLLFGSFPIIVTIFYIIIGFCGVYSFLYLGKIFCKPGIKNVK</sequence>
<name>Y169_RICPR</name>
<reference key="1">
    <citation type="journal article" date="1998" name="Nature">
        <title>The genome sequence of Rickettsia prowazekii and the origin of mitochondria.</title>
        <authorList>
            <person name="Andersson S.G.E."/>
            <person name="Zomorodipour A."/>
            <person name="Andersson J.O."/>
            <person name="Sicheritz-Ponten T."/>
            <person name="Alsmark U.C.M."/>
            <person name="Podowski R.M."/>
            <person name="Naeslund A.K."/>
            <person name="Eriksson A.-S."/>
            <person name="Winkler H.H."/>
            <person name="Kurland C.G."/>
        </authorList>
    </citation>
    <scope>NUCLEOTIDE SEQUENCE [LARGE SCALE GENOMIC DNA]</scope>
    <source>
        <strain>Madrid E</strain>
    </source>
</reference>
<accession>Q9ZDZ4</accession>
<proteinExistence type="predicted"/>
<organism>
    <name type="scientific">Rickettsia prowazekii (strain Madrid E)</name>
    <dbReference type="NCBI Taxonomy" id="272947"/>
    <lineage>
        <taxon>Bacteria</taxon>
        <taxon>Pseudomonadati</taxon>
        <taxon>Pseudomonadota</taxon>
        <taxon>Alphaproteobacteria</taxon>
        <taxon>Rickettsiales</taxon>
        <taxon>Rickettsiaceae</taxon>
        <taxon>Rickettsieae</taxon>
        <taxon>Rickettsia</taxon>
        <taxon>typhus group</taxon>
    </lineage>
</organism>
<comment type="subcellular location">
    <subcellularLocation>
        <location evidence="2">Cell membrane</location>
        <topology evidence="2">Multi-pass membrane protein</topology>
    </subcellularLocation>
</comment>
<dbReference type="EMBL" id="AJ235270">
    <property type="protein sequence ID" value="CAA14636.1"/>
    <property type="molecule type" value="Genomic_DNA"/>
</dbReference>
<dbReference type="PIR" id="E71727">
    <property type="entry name" value="E71727"/>
</dbReference>
<dbReference type="RefSeq" id="NP_220559.1">
    <property type="nucleotide sequence ID" value="NC_000963.1"/>
</dbReference>
<dbReference type="SMR" id="Q9ZDZ4"/>
<dbReference type="STRING" id="272947.gene:17555252"/>
<dbReference type="EnsemblBacteria" id="CAA14636">
    <property type="protein sequence ID" value="CAA14636"/>
    <property type="gene ID" value="CAA14636"/>
</dbReference>
<dbReference type="KEGG" id="rpr:RP169"/>
<dbReference type="PATRIC" id="fig|272947.5.peg.174"/>
<dbReference type="eggNOG" id="COG2155">
    <property type="taxonomic scope" value="Bacteria"/>
</dbReference>
<dbReference type="HOGENOM" id="CLU_2619757_0_0_5"/>
<dbReference type="Proteomes" id="UP000002480">
    <property type="component" value="Chromosome"/>
</dbReference>
<dbReference type="GO" id="GO:0005886">
    <property type="term" value="C:plasma membrane"/>
    <property type="evidence" value="ECO:0007669"/>
    <property type="project" value="UniProtKB-SubCell"/>
</dbReference>
<dbReference type="InterPro" id="IPR007211">
    <property type="entry name" value="DUF378"/>
</dbReference>
<dbReference type="PANTHER" id="PTHR37304:SF1">
    <property type="entry name" value="MEMBRANE PROTEIN"/>
    <property type="match status" value="1"/>
</dbReference>
<dbReference type="PANTHER" id="PTHR37304">
    <property type="entry name" value="MEMBRANE PROTEIN-RELATED"/>
    <property type="match status" value="1"/>
</dbReference>
<dbReference type="Pfam" id="PF04070">
    <property type="entry name" value="DUF378"/>
    <property type="match status" value="1"/>
</dbReference>
<keyword id="KW-1003">Cell membrane</keyword>
<keyword id="KW-0472">Membrane</keyword>
<keyword id="KW-1185">Reference proteome</keyword>
<keyword id="KW-0812">Transmembrane</keyword>
<keyword id="KW-1133">Transmembrane helix</keyword>
<protein>
    <recommendedName>
        <fullName>Uncharacterized protein RP169</fullName>
    </recommendedName>
</protein>
<feature type="chain" id="PRO_0000101326" description="Uncharacterized protein RP169">
    <location>
        <begin position="1"/>
        <end position="90"/>
    </location>
</feature>
<feature type="transmembrane region" description="Helical" evidence="1">
    <location>
        <begin position="23"/>
        <end position="43"/>
    </location>
</feature>
<feature type="transmembrane region" description="Helical" evidence="1">
    <location>
        <begin position="48"/>
        <end position="68"/>
    </location>
</feature>